<organism>
    <name type="scientific">Clostridium botulinum (strain Langeland / NCTC 10281 / Type F)</name>
    <dbReference type="NCBI Taxonomy" id="441772"/>
    <lineage>
        <taxon>Bacteria</taxon>
        <taxon>Bacillati</taxon>
        <taxon>Bacillota</taxon>
        <taxon>Clostridia</taxon>
        <taxon>Eubacteriales</taxon>
        <taxon>Clostridiaceae</taxon>
        <taxon>Clostridium</taxon>
    </lineage>
</organism>
<proteinExistence type="inferred from homology"/>
<feature type="chain" id="PRO_1000003728" description="Nucleoid-associated protein CLI_0048">
    <location>
        <begin position="1"/>
        <end position="113"/>
    </location>
</feature>
<feature type="region of interest" description="Disordered" evidence="2">
    <location>
        <begin position="93"/>
        <end position="113"/>
    </location>
</feature>
<feature type="compositionally biased region" description="Basic and acidic residues" evidence="2">
    <location>
        <begin position="93"/>
        <end position="102"/>
    </location>
</feature>
<name>Y048_CLOBL</name>
<gene>
    <name type="ordered locus">CLI_0048</name>
</gene>
<comment type="function">
    <text evidence="1">Binds to DNA and alters its conformation. May be involved in regulation of gene expression, nucleoid organization and DNA protection.</text>
</comment>
<comment type="subunit">
    <text evidence="1">Homodimer.</text>
</comment>
<comment type="subcellular location">
    <subcellularLocation>
        <location evidence="1">Cytoplasm</location>
        <location evidence="1">Nucleoid</location>
    </subcellularLocation>
</comment>
<comment type="similarity">
    <text evidence="1">Belongs to the YbaB/EbfC family.</text>
</comment>
<keyword id="KW-0963">Cytoplasm</keyword>
<keyword id="KW-0238">DNA-binding</keyword>
<protein>
    <recommendedName>
        <fullName evidence="1">Nucleoid-associated protein CLI_0048</fullName>
    </recommendedName>
</protein>
<accession>A7G9D4</accession>
<dbReference type="EMBL" id="CP000728">
    <property type="protein sequence ID" value="ABS42690.1"/>
    <property type="molecule type" value="Genomic_DNA"/>
</dbReference>
<dbReference type="RefSeq" id="WP_003359499.1">
    <property type="nucleotide sequence ID" value="NC_009699.1"/>
</dbReference>
<dbReference type="SMR" id="A7G9D4"/>
<dbReference type="KEGG" id="cbf:CLI_0048"/>
<dbReference type="HOGENOM" id="CLU_140930_1_0_9"/>
<dbReference type="Proteomes" id="UP000002410">
    <property type="component" value="Chromosome"/>
</dbReference>
<dbReference type="GO" id="GO:0043590">
    <property type="term" value="C:bacterial nucleoid"/>
    <property type="evidence" value="ECO:0007669"/>
    <property type="project" value="UniProtKB-UniRule"/>
</dbReference>
<dbReference type="GO" id="GO:0005829">
    <property type="term" value="C:cytosol"/>
    <property type="evidence" value="ECO:0007669"/>
    <property type="project" value="TreeGrafter"/>
</dbReference>
<dbReference type="GO" id="GO:0003677">
    <property type="term" value="F:DNA binding"/>
    <property type="evidence" value="ECO:0007669"/>
    <property type="project" value="UniProtKB-UniRule"/>
</dbReference>
<dbReference type="FunFam" id="3.30.1310.10:FF:000002">
    <property type="entry name" value="Nucleoid-associated protein IKC_06587"/>
    <property type="match status" value="1"/>
</dbReference>
<dbReference type="Gene3D" id="3.30.1310.10">
    <property type="entry name" value="Nucleoid-associated protein YbaB-like domain"/>
    <property type="match status" value="1"/>
</dbReference>
<dbReference type="HAMAP" id="MF_00274">
    <property type="entry name" value="DNA_YbaB_EbfC"/>
    <property type="match status" value="1"/>
</dbReference>
<dbReference type="InterPro" id="IPR036894">
    <property type="entry name" value="YbaB-like_sf"/>
</dbReference>
<dbReference type="InterPro" id="IPR004401">
    <property type="entry name" value="YbaB/EbfC"/>
</dbReference>
<dbReference type="NCBIfam" id="TIGR00103">
    <property type="entry name" value="DNA_YbaB_EbfC"/>
    <property type="match status" value="1"/>
</dbReference>
<dbReference type="PANTHER" id="PTHR33449">
    <property type="entry name" value="NUCLEOID-ASSOCIATED PROTEIN YBAB"/>
    <property type="match status" value="1"/>
</dbReference>
<dbReference type="PANTHER" id="PTHR33449:SF1">
    <property type="entry name" value="NUCLEOID-ASSOCIATED PROTEIN YBAB"/>
    <property type="match status" value="1"/>
</dbReference>
<dbReference type="Pfam" id="PF02575">
    <property type="entry name" value="YbaB_DNA_bd"/>
    <property type="match status" value="1"/>
</dbReference>
<dbReference type="PIRSF" id="PIRSF004555">
    <property type="entry name" value="UCP004555"/>
    <property type="match status" value="1"/>
</dbReference>
<dbReference type="SUPFAM" id="SSF82607">
    <property type="entry name" value="YbaB-like"/>
    <property type="match status" value="1"/>
</dbReference>
<sequence>MARGGFPNMGGANMNNLMKQAQKLQQDMEKMQGEMEKKEFSATVGGGAVTAVANGKKQIVDIKIEPEVVDEDDIEMLEDLIMSACNEALKKAEEDTSSEVKRLTGGMNLPGMF</sequence>
<evidence type="ECO:0000255" key="1">
    <source>
        <dbReference type="HAMAP-Rule" id="MF_00274"/>
    </source>
</evidence>
<evidence type="ECO:0000256" key="2">
    <source>
        <dbReference type="SAM" id="MobiDB-lite"/>
    </source>
</evidence>
<reference key="1">
    <citation type="submission" date="2007-06" db="EMBL/GenBank/DDBJ databases">
        <authorList>
            <person name="Brinkac L.M."/>
            <person name="Daugherty S."/>
            <person name="Dodson R.J."/>
            <person name="Madupu R."/>
            <person name="Brown J.L."/>
            <person name="Bruce D."/>
            <person name="Detter C."/>
            <person name="Munk C."/>
            <person name="Smith L.A."/>
            <person name="Smith T.J."/>
            <person name="White O."/>
            <person name="Brettin T.S."/>
        </authorList>
    </citation>
    <scope>NUCLEOTIDE SEQUENCE [LARGE SCALE GENOMIC DNA]</scope>
    <source>
        <strain>Langeland / NCTC 10281 / Type F</strain>
    </source>
</reference>